<reference key="1">
    <citation type="journal article" date="2003" name="Genome Res.">
        <title>Comparative genome analysis of Vibrio vulnificus, a marine pathogen.</title>
        <authorList>
            <person name="Chen C.-Y."/>
            <person name="Wu K.-M."/>
            <person name="Chang Y.-C."/>
            <person name="Chang C.-H."/>
            <person name="Tsai H.-C."/>
            <person name="Liao T.-L."/>
            <person name="Liu Y.-M."/>
            <person name="Chen H.-J."/>
            <person name="Shen A.B.-T."/>
            <person name="Li J.-C."/>
            <person name="Su T.-L."/>
            <person name="Shao C.-P."/>
            <person name="Lee C.-T."/>
            <person name="Hor L.-I."/>
            <person name="Tsai S.-F."/>
        </authorList>
    </citation>
    <scope>NUCLEOTIDE SEQUENCE [LARGE SCALE GENOMIC DNA]</scope>
    <source>
        <strain>YJ016</strain>
    </source>
</reference>
<keyword id="KW-0963">Cytoplasm</keyword>
<keyword id="KW-0489">Methyltransferase</keyword>
<keyword id="KW-0694">RNA-binding</keyword>
<keyword id="KW-0698">rRNA processing</keyword>
<keyword id="KW-0949">S-adenosyl-L-methionine</keyword>
<keyword id="KW-0808">Transferase</keyword>
<sequence>MHSNVYLPETFLEKIKTILPSALNMDDFIAYCQQPLRKSIRVNTLKISVDAFLTIAQEKGWTLHPVPWCETGFWIEADESKVPLGNTAEHMCGLFYIQEASSMMPVSALFLGENQFESVLDTAAAPGSKTTQIAALMNNQGILVANEYAASRVKVLHANIERCGVRNAALSNFDGRVFGGWLPESFDAVLLDAPCSGEGTVRKDEDAMKNWSQESVLEIAATQKDLIESAFQALKPGGVMVYSTCTLSEEENQQVCHHLKHTFGDAVAFESLSSLFDGAEKALTEDGFLHIFPQVYDSEGFFVARIRKLASVNSPDVNKKMGKFPFQKASKKESALIEKSLSDSLDISLPADSTIWLRDNDVWLFPNALEPMLGELRFSRMGIKLAEKHKNGYRWQHQIATTLASGDEKTVVDIDTDAAREWFMGRDIYPENSGKGEVFVRYQGAIIGLGKWVSNKIKNGLPRELVRDKNLF</sequence>
<evidence type="ECO:0000255" key="1">
    <source>
        <dbReference type="HAMAP-Rule" id="MF_01579"/>
    </source>
</evidence>
<evidence type="ECO:0000305" key="2"/>
<feature type="chain" id="PRO_0000285026" description="Ribosomal RNA small subunit methyltransferase F">
    <location>
        <begin position="1"/>
        <end position="472"/>
    </location>
</feature>
<feature type="active site" description="Nucleophile" evidence="1">
    <location>
        <position position="245"/>
    </location>
</feature>
<feature type="binding site" evidence="1">
    <location>
        <begin position="123"/>
        <end position="129"/>
    </location>
    <ligand>
        <name>S-adenosyl-L-methionine</name>
        <dbReference type="ChEBI" id="CHEBI:59789"/>
    </ligand>
</feature>
<feature type="binding site" evidence="1">
    <location>
        <position position="147"/>
    </location>
    <ligand>
        <name>S-adenosyl-L-methionine</name>
        <dbReference type="ChEBI" id="CHEBI:59789"/>
    </ligand>
</feature>
<feature type="binding site" evidence="1">
    <location>
        <position position="174"/>
    </location>
    <ligand>
        <name>S-adenosyl-L-methionine</name>
        <dbReference type="ChEBI" id="CHEBI:59789"/>
    </ligand>
</feature>
<feature type="binding site" evidence="1">
    <location>
        <position position="192"/>
    </location>
    <ligand>
        <name>S-adenosyl-L-methionine</name>
        <dbReference type="ChEBI" id="CHEBI:59789"/>
    </ligand>
</feature>
<gene>
    <name evidence="1" type="primary">rsmF</name>
    <name type="ordered locus">VV1641</name>
</gene>
<proteinExistence type="inferred from homology"/>
<comment type="function">
    <text evidence="1">Specifically methylates the cytosine at position 1407 (m5C1407) of 16S rRNA.</text>
</comment>
<comment type="catalytic activity">
    <reaction evidence="1">
        <text>cytidine(1407) in 16S rRNA + S-adenosyl-L-methionine = 5-methylcytidine(1407) in 16S rRNA + S-adenosyl-L-homocysteine + H(+)</text>
        <dbReference type="Rhea" id="RHEA:42756"/>
        <dbReference type="Rhea" id="RHEA-COMP:10223"/>
        <dbReference type="Rhea" id="RHEA-COMP:10224"/>
        <dbReference type="ChEBI" id="CHEBI:15378"/>
        <dbReference type="ChEBI" id="CHEBI:57856"/>
        <dbReference type="ChEBI" id="CHEBI:59789"/>
        <dbReference type="ChEBI" id="CHEBI:74483"/>
        <dbReference type="ChEBI" id="CHEBI:82748"/>
        <dbReference type="EC" id="2.1.1.178"/>
    </reaction>
</comment>
<comment type="subcellular location">
    <subcellularLocation>
        <location evidence="1">Cytoplasm</location>
    </subcellularLocation>
</comment>
<comment type="similarity">
    <text evidence="1">Belongs to the class I-like SAM-binding methyltransferase superfamily. RsmB/NOP family.</text>
</comment>
<comment type="sequence caution" evidence="2">
    <conflict type="erroneous initiation">
        <sequence resource="EMBL-CDS" id="BAC94405"/>
    </conflict>
</comment>
<organism>
    <name type="scientific">Vibrio vulnificus (strain YJ016)</name>
    <dbReference type="NCBI Taxonomy" id="196600"/>
    <lineage>
        <taxon>Bacteria</taxon>
        <taxon>Pseudomonadati</taxon>
        <taxon>Pseudomonadota</taxon>
        <taxon>Gammaproteobacteria</taxon>
        <taxon>Vibrionales</taxon>
        <taxon>Vibrionaceae</taxon>
        <taxon>Vibrio</taxon>
    </lineage>
</organism>
<dbReference type="EC" id="2.1.1.178" evidence="1"/>
<dbReference type="EMBL" id="BA000037">
    <property type="protein sequence ID" value="BAC94405.1"/>
    <property type="status" value="ALT_INIT"/>
    <property type="molecule type" value="Genomic_DNA"/>
</dbReference>
<dbReference type="RefSeq" id="WP_011080492.1">
    <property type="nucleotide sequence ID" value="NC_005139.1"/>
</dbReference>
<dbReference type="SMR" id="Q7MKY6"/>
<dbReference type="STRING" id="672.VV93_v1c15160"/>
<dbReference type="KEGG" id="vvy:VV1641"/>
<dbReference type="PATRIC" id="fig|196600.6.peg.1620"/>
<dbReference type="eggNOG" id="COG0144">
    <property type="taxonomic scope" value="Bacteria"/>
</dbReference>
<dbReference type="eggNOG" id="COG3270">
    <property type="taxonomic scope" value="Bacteria"/>
</dbReference>
<dbReference type="HOGENOM" id="CLU_005316_6_2_6"/>
<dbReference type="Proteomes" id="UP000002675">
    <property type="component" value="Chromosome I"/>
</dbReference>
<dbReference type="GO" id="GO:0005737">
    <property type="term" value="C:cytoplasm"/>
    <property type="evidence" value="ECO:0007669"/>
    <property type="project" value="UniProtKB-SubCell"/>
</dbReference>
<dbReference type="GO" id="GO:0003723">
    <property type="term" value="F:RNA binding"/>
    <property type="evidence" value="ECO:0007669"/>
    <property type="project" value="UniProtKB-KW"/>
</dbReference>
<dbReference type="GO" id="GO:0009383">
    <property type="term" value="F:rRNA (cytosine-C5-)-methyltransferase activity"/>
    <property type="evidence" value="ECO:0007669"/>
    <property type="project" value="TreeGrafter"/>
</dbReference>
<dbReference type="GO" id="GO:0070475">
    <property type="term" value="P:rRNA base methylation"/>
    <property type="evidence" value="ECO:0007669"/>
    <property type="project" value="TreeGrafter"/>
</dbReference>
<dbReference type="CDD" id="cd02440">
    <property type="entry name" value="AdoMet_MTases"/>
    <property type="match status" value="1"/>
</dbReference>
<dbReference type="Gene3D" id="3.10.450.720">
    <property type="match status" value="1"/>
</dbReference>
<dbReference type="Gene3D" id="3.40.50.150">
    <property type="entry name" value="Vaccinia Virus protein VP39"/>
    <property type="match status" value="1"/>
</dbReference>
<dbReference type="HAMAP" id="MF_01579">
    <property type="entry name" value="16SrRNA_methyltr_F"/>
    <property type="match status" value="1"/>
</dbReference>
<dbReference type="InterPro" id="IPR031341">
    <property type="entry name" value="Methyltr_RsmF_N"/>
</dbReference>
<dbReference type="InterPro" id="IPR049560">
    <property type="entry name" value="MeTrfase_RsmB-F_NOP2_cat"/>
</dbReference>
<dbReference type="InterPro" id="IPR001678">
    <property type="entry name" value="MeTrfase_RsmB-F_NOP2_dom"/>
</dbReference>
<dbReference type="InterPro" id="IPR027391">
    <property type="entry name" value="Nol1_Nop2_Fmu_2"/>
</dbReference>
<dbReference type="InterPro" id="IPR011023">
    <property type="entry name" value="Nop2p"/>
</dbReference>
<dbReference type="InterPro" id="IPR023267">
    <property type="entry name" value="RCMT"/>
</dbReference>
<dbReference type="InterPro" id="IPR023545">
    <property type="entry name" value="rRNA_ssu_MeTfrase_F"/>
</dbReference>
<dbReference type="InterPro" id="IPR018314">
    <property type="entry name" value="RsmB/NOL1/NOP2-like_CS"/>
</dbReference>
<dbReference type="InterPro" id="IPR029063">
    <property type="entry name" value="SAM-dependent_MTases_sf"/>
</dbReference>
<dbReference type="InterPro" id="IPR048457">
    <property type="entry name" value="YebU_pre-PUA_dom"/>
</dbReference>
<dbReference type="NCBIfam" id="TIGR00446">
    <property type="entry name" value="nop2p"/>
    <property type="match status" value="1"/>
</dbReference>
<dbReference type="NCBIfam" id="NF008898">
    <property type="entry name" value="PRK11933.1"/>
    <property type="match status" value="1"/>
</dbReference>
<dbReference type="PANTHER" id="PTHR22807:SF30">
    <property type="entry name" value="28S RRNA (CYTOSINE(4447)-C(5))-METHYLTRANSFERASE-RELATED"/>
    <property type="match status" value="1"/>
</dbReference>
<dbReference type="PANTHER" id="PTHR22807">
    <property type="entry name" value="NOP2 YEAST -RELATED NOL1/NOP2/FMU SUN DOMAIN-CONTAINING"/>
    <property type="match status" value="1"/>
</dbReference>
<dbReference type="Pfam" id="PF01189">
    <property type="entry name" value="Methyltr_RsmB-F"/>
    <property type="match status" value="1"/>
</dbReference>
<dbReference type="Pfam" id="PF17125">
    <property type="entry name" value="Methyltr_RsmF_N"/>
    <property type="match status" value="1"/>
</dbReference>
<dbReference type="Pfam" id="PF13636">
    <property type="entry name" value="Methyltranf_PUA"/>
    <property type="match status" value="1"/>
</dbReference>
<dbReference type="Pfam" id="PF21150">
    <property type="entry name" value="YebU_pre-PUA_dom"/>
    <property type="match status" value="1"/>
</dbReference>
<dbReference type="PRINTS" id="PR02008">
    <property type="entry name" value="RCMTFAMILY"/>
</dbReference>
<dbReference type="SUPFAM" id="SSF53335">
    <property type="entry name" value="S-adenosyl-L-methionine-dependent methyltransferases"/>
    <property type="match status" value="1"/>
</dbReference>
<dbReference type="PROSITE" id="PS01153">
    <property type="entry name" value="NOL1_NOP2_SUN"/>
    <property type="match status" value="1"/>
</dbReference>
<dbReference type="PROSITE" id="PS51686">
    <property type="entry name" value="SAM_MT_RSMB_NOP"/>
    <property type="match status" value="1"/>
</dbReference>
<name>RSMF_VIBVY</name>
<protein>
    <recommendedName>
        <fullName evidence="1">Ribosomal RNA small subunit methyltransferase F</fullName>
        <ecNumber evidence="1">2.1.1.178</ecNumber>
    </recommendedName>
    <alternativeName>
        <fullName evidence="1">16S rRNA m5C1407 methyltransferase</fullName>
    </alternativeName>
    <alternativeName>
        <fullName evidence="1">rRNA (cytosine-C(5)-)-methyltransferase RsmF</fullName>
    </alternativeName>
</protein>
<accession>Q7MKY6</accession>